<accession>B8ZRI2</accession>
<proteinExistence type="inferred from homology"/>
<comment type="catalytic activity">
    <reaction evidence="1">
        <text>CMP + ATP = CDP + ADP</text>
        <dbReference type="Rhea" id="RHEA:11600"/>
        <dbReference type="ChEBI" id="CHEBI:30616"/>
        <dbReference type="ChEBI" id="CHEBI:58069"/>
        <dbReference type="ChEBI" id="CHEBI:60377"/>
        <dbReference type="ChEBI" id="CHEBI:456216"/>
        <dbReference type="EC" id="2.7.4.25"/>
    </reaction>
</comment>
<comment type="catalytic activity">
    <reaction evidence="1">
        <text>dCMP + ATP = dCDP + ADP</text>
        <dbReference type="Rhea" id="RHEA:25094"/>
        <dbReference type="ChEBI" id="CHEBI:30616"/>
        <dbReference type="ChEBI" id="CHEBI:57566"/>
        <dbReference type="ChEBI" id="CHEBI:58593"/>
        <dbReference type="ChEBI" id="CHEBI:456216"/>
        <dbReference type="EC" id="2.7.4.25"/>
    </reaction>
</comment>
<comment type="subcellular location">
    <subcellularLocation>
        <location evidence="1">Cytoplasm</location>
    </subcellularLocation>
</comment>
<comment type="similarity">
    <text evidence="1">Belongs to the cytidylate kinase family. Type 1 subfamily.</text>
</comment>
<keyword id="KW-0067">ATP-binding</keyword>
<keyword id="KW-0963">Cytoplasm</keyword>
<keyword id="KW-0418">Kinase</keyword>
<keyword id="KW-0547">Nucleotide-binding</keyword>
<keyword id="KW-0808">Transferase</keyword>
<protein>
    <recommendedName>
        <fullName evidence="1">Cytidylate kinase</fullName>
        <shortName evidence="1">CK</shortName>
        <ecNumber evidence="1">2.7.4.25</ecNumber>
    </recommendedName>
    <alternativeName>
        <fullName evidence="1">Cytidine monophosphate kinase</fullName>
        <shortName evidence="1">CMP kinase</shortName>
    </alternativeName>
</protein>
<evidence type="ECO:0000255" key="1">
    <source>
        <dbReference type="HAMAP-Rule" id="MF_00238"/>
    </source>
</evidence>
<gene>
    <name evidence="1" type="primary">cmk</name>
    <name type="ordered locus">MLBr01371</name>
</gene>
<organism>
    <name type="scientific">Mycobacterium leprae (strain Br4923)</name>
    <dbReference type="NCBI Taxonomy" id="561304"/>
    <lineage>
        <taxon>Bacteria</taxon>
        <taxon>Bacillati</taxon>
        <taxon>Actinomycetota</taxon>
        <taxon>Actinomycetes</taxon>
        <taxon>Mycobacteriales</taxon>
        <taxon>Mycobacteriaceae</taxon>
        <taxon>Mycobacterium</taxon>
    </lineage>
</organism>
<dbReference type="EC" id="2.7.4.25" evidence="1"/>
<dbReference type="EMBL" id="FM211192">
    <property type="protein sequence ID" value="CAR71466.1"/>
    <property type="molecule type" value="Genomic_DNA"/>
</dbReference>
<dbReference type="SMR" id="B8ZRI2"/>
<dbReference type="KEGG" id="mlb:MLBr01371"/>
<dbReference type="HOGENOM" id="CLU_079959_0_0_11"/>
<dbReference type="Proteomes" id="UP000006900">
    <property type="component" value="Chromosome"/>
</dbReference>
<dbReference type="GO" id="GO:0005829">
    <property type="term" value="C:cytosol"/>
    <property type="evidence" value="ECO:0007669"/>
    <property type="project" value="TreeGrafter"/>
</dbReference>
<dbReference type="GO" id="GO:0005524">
    <property type="term" value="F:ATP binding"/>
    <property type="evidence" value="ECO:0007669"/>
    <property type="project" value="UniProtKB-UniRule"/>
</dbReference>
<dbReference type="GO" id="GO:0036430">
    <property type="term" value="F:CMP kinase activity"/>
    <property type="evidence" value="ECO:0007669"/>
    <property type="project" value="RHEA"/>
</dbReference>
<dbReference type="GO" id="GO:0036431">
    <property type="term" value="F:dCMP kinase activity"/>
    <property type="evidence" value="ECO:0007669"/>
    <property type="project" value="RHEA"/>
</dbReference>
<dbReference type="GO" id="GO:0015949">
    <property type="term" value="P:nucleobase-containing small molecule interconversion"/>
    <property type="evidence" value="ECO:0007669"/>
    <property type="project" value="TreeGrafter"/>
</dbReference>
<dbReference type="GO" id="GO:0006220">
    <property type="term" value="P:pyrimidine nucleotide metabolic process"/>
    <property type="evidence" value="ECO:0007669"/>
    <property type="project" value="UniProtKB-UniRule"/>
</dbReference>
<dbReference type="CDD" id="cd02020">
    <property type="entry name" value="CMPK"/>
    <property type="match status" value="1"/>
</dbReference>
<dbReference type="Gene3D" id="3.40.50.300">
    <property type="entry name" value="P-loop containing nucleotide triphosphate hydrolases"/>
    <property type="match status" value="1"/>
</dbReference>
<dbReference type="HAMAP" id="MF_00238">
    <property type="entry name" value="Cytidyl_kinase_type1"/>
    <property type="match status" value="1"/>
</dbReference>
<dbReference type="InterPro" id="IPR003136">
    <property type="entry name" value="Cytidylate_kin"/>
</dbReference>
<dbReference type="InterPro" id="IPR011994">
    <property type="entry name" value="Cytidylate_kinase_dom"/>
</dbReference>
<dbReference type="InterPro" id="IPR027417">
    <property type="entry name" value="P-loop_NTPase"/>
</dbReference>
<dbReference type="NCBIfam" id="TIGR00017">
    <property type="entry name" value="cmk"/>
    <property type="match status" value="1"/>
</dbReference>
<dbReference type="PANTHER" id="PTHR21299:SF2">
    <property type="entry name" value="CYTIDYLATE KINASE"/>
    <property type="match status" value="1"/>
</dbReference>
<dbReference type="PANTHER" id="PTHR21299">
    <property type="entry name" value="CYTIDYLATE KINASE/PANTOATE-BETA-ALANINE LIGASE"/>
    <property type="match status" value="1"/>
</dbReference>
<dbReference type="Pfam" id="PF02224">
    <property type="entry name" value="Cytidylate_kin"/>
    <property type="match status" value="1"/>
</dbReference>
<dbReference type="SUPFAM" id="SSF52540">
    <property type="entry name" value="P-loop containing nucleoside triphosphate hydrolases"/>
    <property type="match status" value="1"/>
</dbReference>
<reference key="1">
    <citation type="journal article" date="2009" name="Nat. Genet.">
        <title>Comparative genomic and phylogeographic analysis of Mycobacterium leprae.</title>
        <authorList>
            <person name="Monot M."/>
            <person name="Honore N."/>
            <person name="Garnier T."/>
            <person name="Zidane N."/>
            <person name="Sherafi D."/>
            <person name="Paniz-Mondolfi A."/>
            <person name="Matsuoka M."/>
            <person name="Taylor G.M."/>
            <person name="Donoghue H.D."/>
            <person name="Bouwman A."/>
            <person name="Mays S."/>
            <person name="Watson C."/>
            <person name="Lockwood D."/>
            <person name="Khamispour A."/>
            <person name="Dowlati Y."/>
            <person name="Jianping S."/>
            <person name="Rea T.H."/>
            <person name="Vera-Cabrera L."/>
            <person name="Stefani M.M."/>
            <person name="Banu S."/>
            <person name="Macdonald M."/>
            <person name="Sapkota B.R."/>
            <person name="Spencer J.S."/>
            <person name="Thomas J."/>
            <person name="Harshman K."/>
            <person name="Singh P."/>
            <person name="Busso P."/>
            <person name="Gattiker A."/>
            <person name="Rougemont J."/>
            <person name="Brennan P.J."/>
            <person name="Cole S.T."/>
        </authorList>
    </citation>
    <scope>NUCLEOTIDE SEQUENCE [LARGE SCALE GENOMIC DNA]</scope>
    <source>
        <strain>Br4923</strain>
    </source>
</reference>
<name>KCY_MYCLB</name>
<feature type="chain" id="PRO_1000125293" description="Cytidylate kinase">
    <location>
        <begin position="1"/>
        <end position="223"/>
    </location>
</feature>
<feature type="binding site" evidence="1">
    <location>
        <begin position="10"/>
        <end position="18"/>
    </location>
    <ligand>
        <name>ATP</name>
        <dbReference type="ChEBI" id="CHEBI:30616"/>
    </ligand>
</feature>
<sequence length="223" mass="24110">MTDIVVAIDGPAGTGKSSVSRGLARELGARYLDTGAMYRMMTLAVLRAGIDPADAAAIGESVWKVQMLSDHDRYFLGGEDVSSEIRTEEVTQAVSAVSAIPAVRVRLVDLQRQMAEGRGSVVVEGRDIGTVVLPDAPVKIFLTASPETRARRRNDQNVASGSADDYDRVLAEVRRRDHLDSTRAVSPLYVAQDAMIVDTSKMAEAEVIAHLMDLVKQRSGAVW</sequence>